<organism>
    <name type="scientific">Xenopus laevis</name>
    <name type="common">African clawed frog</name>
    <dbReference type="NCBI Taxonomy" id="8355"/>
    <lineage>
        <taxon>Eukaryota</taxon>
        <taxon>Metazoa</taxon>
        <taxon>Chordata</taxon>
        <taxon>Craniata</taxon>
        <taxon>Vertebrata</taxon>
        <taxon>Euteleostomi</taxon>
        <taxon>Amphibia</taxon>
        <taxon>Batrachia</taxon>
        <taxon>Anura</taxon>
        <taxon>Pipoidea</taxon>
        <taxon>Pipidae</taxon>
        <taxon>Xenopodinae</taxon>
        <taxon>Xenopus</taxon>
        <taxon>Xenopus</taxon>
    </lineage>
</organism>
<reference key="1">
    <citation type="submission" date="2004-05" db="EMBL/GenBank/DDBJ databases">
        <authorList>
            <consortium name="NIH - Xenopus Gene Collection (XGC) project"/>
        </authorList>
    </citation>
    <scope>NUCLEOTIDE SEQUENCE [LARGE SCALE MRNA]</scope>
    <source>
        <tissue>Embryo</tissue>
    </source>
</reference>
<protein>
    <recommendedName>
        <fullName>CCR4-NOT transcription complex subunit 6-like-B</fullName>
        <ecNumber evidence="2">3.1.13.4</ecNumber>
    </recommendedName>
</protein>
<keyword id="KW-0963">Cytoplasm</keyword>
<keyword id="KW-0269">Exonuclease</keyword>
<keyword id="KW-0378">Hydrolase</keyword>
<keyword id="KW-0433">Leucine-rich repeat</keyword>
<keyword id="KW-0460">Magnesium</keyword>
<keyword id="KW-0479">Metal-binding</keyword>
<keyword id="KW-0507">mRNA processing</keyword>
<keyword id="KW-0540">Nuclease</keyword>
<keyword id="KW-0539">Nucleus</keyword>
<keyword id="KW-1185">Reference proteome</keyword>
<keyword id="KW-0677">Repeat</keyword>
<keyword id="KW-0943">RNA-mediated gene silencing</keyword>
<keyword id="KW-0804">Transcription</keyword>
<keyword id="KW-0805">Transcription regulation</keyword>
<keyword id="KW-0810">Translation regulation</keyword>
<evidence type="ECO:0000250" key="1"/>
<evidence type="ECO:0000250" key="2">
    <source>
        <dbReference type="UniProtKB" id="Q96LI5"/>
    </source>
</evidence>
<evidence type="ECO:0000305" key="3"/>
<dbReference type="EC" id="3.1.13.4" evidence="2"/>
<dbReference type="EMBL" id="BC084200">
    <property type="protein sequence ID" value="AAH84200.1"/>
    <property type="molecule type" value="mRNA"/>
</dbReference>
<dbReference type="RefSeq" id="NP_001088222.1">
    <property type="nucleotide sequence ID" value="NM_001094753.1"/>
</dbReference>
<dbReference type="SMR" id="Q5XH73"/>
<dbReference type="DNASU" id="495050"/>
<dbReference type="GeneID" id="495050"/>
<dbReference type="KEGG" id="xla:495050"/>
<dbReference type="AGR" id="Xenbase:XB-GENE-977554"/>
<dbReference type="CTD" id="495050"/>
<dbReference type="Xenbase" id="XB-GENE-977554">
    <property type="gene designation" value="cnot6l.S"/>
</dbReference>
<dbReference type="OMA" id="EREYDRF"/>
<dbReference type="OrthoDB" id="428734at2759"/>
<dbReference type="Proteomes" id="UP000186698">
    <property type="component" value="Chromosome 1S"/>
</dbReference>
<dbReference type="Bgee" id="495050">
    <property type="expression patterns" value="Expressed in egg cell and 19 other cell types or tissues"/>
</dbReference>
<dbReference type="GO" id="GO:0030014">
    <property type="term" value="C:CCR4-NOT complex"/>
    <property type="evidence" value="ECO:0000250"/>
    <property type="project" value="UniProtKB"/>
</dbReference>
<dbReference type="GO" id="GO:0005737">
    <property type="term" value="C:cytoplasm"/>
    <property type="evidence" value="ECO:0000250"/>
    <property type="project" value="UniProtKB"/>
</dbReference>
<dbReference type="GO" id="GO:0005634">
    <property type="term" value="C:nucleus"/>
    <property type="evidence" value="ECO:0000250"/>
    <property type="project" value="UniProtKB"/>
</dbReference>
<dbReference type="GO" id="GO:0000175">
    <property type="term" value="F:3'-5'-RNA exonuclease activity"/>
    <property type="evidence" value="ECO:0000318"/>
    <property type="project" value="GO_Central"/>
</dbReference>
<dbReference type="GO" id="GO:0046872">
    <property type="term" value="F:metal ion binding"/>
    <property type="evidence" value="ECO:0007669"/>
    <property type="project" value="UniProtKB-KW"/>
</dbReference>
<dbReference type="GO" id="GO:0004535">
    <property type="term" value="F:poly(A)-specific ribonuclease activity"/>
    <property type="evidence" value="ECO:0007669"/>
    <property type="project" value="UniProtKB-EC"/>
</dbReference>
<dbReference type="GO" id="GO:0006397">
    <property type="term" value="P:mRNA processing"/>
    <property type="evidence" value="ECO:0007669"/>
    <property type="project" value="UniProtKB-KW"/>
</dbReference>
<dbReference type="GO" id="GO:0006417">
    <property type="term" value="P:regulation of translation"/>
    <property type="evidence" value="ECO:0007669"/>
    <property type="project" value="UniProtKB-KW"/>
</dbReference>
<dbReference type="GO" id="GO:0031047">
    <property type="term" value="P:regulatory ncRNA-mediated gene silencing"/>
    <property type="evidence" value="ECO:0007669"/>
    <property type="project" value="UniProtKB-KW"/>
</dbReference>
<dbReference type="CDD" id="cd10312">
    <property type="entry name" value="Deadenylase_CCR4b"/>
    <property type="match status" value="1"/>
</dbReference>
<dbReference type="FunFam" id="3.60.10.10:FF:000002">
    <property type="entry name" value="CCR4-NOT transcription complex subunit 6 like"/>
    <property type="match status" value="1"/>
</dbReference>
<dbReference type="FunFam" id="3.80.10.10:FF:000008">
    <property type="entry name" value="CCR4-NOT transcription complex subunit 6 like"/>
    <property type="match status" value="1"/>
</dbReference>
<dbReference type="Gene3D" id="3.60.10.10">
    <property type="entry name" value="Endonuclease/exonuclease/phosphatase"/>
    <property type="match status" value="1"/>
</dbReference>
<dbReference type="Gene3D" id="3.80.10.10">
    <property type="entry name" value="Ribonuclease Inhibitor"/>
    <property type="match status" value="1"/>
</dbReference>
<dbReference type="InterPro" id="IPR050410">
    <property type="entry name" value="CCR4/nocturin_mRNA_transcr"/>
</dbReference>
<dbReference type="InterPro" id="IPR034967">
    <property type="entry name" value="Deadenylase_CCR4b"/>
</dbReference>
<dbReference type="InterPro" id="IPR036691">
    <property type="entry name" value="Endo/exonu/phosph_ase_sf"/>
</dbReference>
<dbReference type="InterPro" id="IPR005135">
    <property type="entry name" value="Endo/exonuclease/phosphatase"/>
</dbReference>
<dbReference type="InterPro" id="IPR001611">
    <property type="entry name" value="Leu-rich_rpt"/>
</dbReference>
<dbReference type="InterPro" id="IPR003591">
    <property type="entry name" value="Leu-rich_rpt_typical-subtyp"/>
</dbReference>
<dbReference type="InterPro" id="IPR032675">
    <property type="entry name" value="LRR_dom_sf"/>
</dbReference>
<dbReference type="PANTHER" id="PTHR12121">
    <property type="entry name" value="CARBON CATABOLITE REPRESSOR PROTEIN 4"/>
    <property type="match status" value="1"/>
</dbReference>
<dbReference type="PANTHER" id="PTHR12121:SF35">
    <property type="entry name" value="CCR4-NOT TRANSCRIPTION COMPLEX SUBUNIT 6-LIKE"/>
    <property type="match status" value="1"/>
</dbReference>
<dbReference type="Pfam" id="PF03372">
    <property type="entry name" value="Exo_endo_phos"/>
    <property type="match status" value="2"/>
</dbReference>
<dbReference type="Pfam" id="PF13855">
    <property type="entry name" value="LRR_8"/>
    <property type="match status" value="1"/>
</dbReference>
<dbReference type="SMART" id="SM00369">
    <property type="entry name" value="LRR_TYP"/>
    <property type="match status" value="3"/>
</dbReference>
<dbReference type="SUPFAM" id="SSF56219">
    <property type="entry name" value="DNase I-like"/>
    <property type="match status" value="1"/>
</dbReference>
<dbReference type="SUPFAM" id="SSF52058">
    <property type="entry name" value="L domain-like"/>
    <property type="match status" value="1"/>
</dbReference>
<dbReference type="PROSITE" id="PS51450">
    <property type="entry name" value="LRR"/>
    <property type="match status" value="4"/>
</dbReference>
<accession>Q5XH73</accession>
<name>CN6LB_XENLA</name>
<sequence length="550" mass="62625">MPKEKYDPPDPRRIYTIMSAEEVANGKKSRWDELEISGRVRSLSMSLWSLTHLTVLHLSDNNLSRIPPDIAKLHNLVYLDLSSNKLRSLPAELGNVVSLRELLLNNNLLRVLPFELGRLFRLQTLGLKGNPLSQDILGLYQEPDGMRKLLNYMLDNLSVHPEQLPQRPWITLKERDQILPSVPFTVMCFNVLCDKYATRQLYGYCPSWALNWEYRKKGIMEEIVSCDADIISLQEVETEQYYTLFMPALKERGYDGFFSPKSRAKIMSDQEKKHVDGCAIFFRTEKFSLVQKHTVEFNQIAMANSEGSEAMLNRVMTKDNIGVSVLLEVHTDFSGAGMKPHHSSEKQLLMVANAHMHWDPEYSDVKLIQTMMFVSELKSIIEKAASRPGSPTPDSNSIPFVLCADLNSLPDSGVVEYLTNGGVADNHKDFKELRYNECLTNFSCNGKNGTPDGRITHGFQLRSAYENNLMPYTNYTFDFKGVIDYIFYSKTHIDVLGVLGPLDPQWMMDNNIAGCPHPHIPSDHFSLLTQLELHPPFLPVINGVHLPSRR</sequence>
<feature type="chain" id="PRO_0000314590" description="CCR4-NOT transcription complex subunit 6-like-B">
    <location>
        <begin position="1"/>
        <end position="550"/>
    </location>
</feature>
<feature type="repeat" description="LRR 1">
    <location>
        <begin position="52"/>
        <end position="73"/>
    </location>
</feature>
<feature type="repeat" description="LRR 2">
    <location>
        <begin position="75"/>
        <end position="96"/>
    </location>
</feature>
<feature type="repeat" description="LRR 3">
    <location>
        <begin position="98"/>
        <end position="120"/>
    </location>
</feature>
<feature type="repeat" description="LRR 4">
    <location>
        <begin position="121"/>
        <end position="143"/>
    </location>
</feature>
<feature type="region of interest" description="Required for interaction with cnot1, cnot3 and cnot7" evidence="1">
    <location>
        <begin position="1"/>
        <end position="148"/>
    </location>
</feature>
<feature type="region of interest" description="Nuclease domain" evidence="1">
    <location>
        <begin position="153"/>
        <end position="550"/>
    </location>
</feature>
<feature type="active site" description="Proton donor/acceptor" evidence="2">
    <location>
        <position position="405"/>
    </location>
</feature>
<feature type="binding site" evidence="2">
    <location>
        <position position="235"/>
    </location>
    <ligand>
        <name>Mg(2+)</name>
        <dbReference type="ChEBI" id="CHEBI:18420"/>
        <label>1</label>
    </ligand>
</feature>
<feature type="binding site" evidence="2">
    <location>
        <position position="235"/>
    </location>
    <ligand>
        <name>substrate</name>
    </ligand>
</feature>
<feature type="binding site" evidence="2">
    <location>
        <position position="271"/>
    </location>
    <ligand>
        <name>substrate</name>
    </ligand>
</feature>
<feature type="binding site" evidence="2">
    <location>
        <position position="355"/>
    </location>
    <ligand>
        <name>substrate</name>
    </ligand>
</feature>
<feature type="binding site" evidence="2">
    <location>
        <position position="360"/>
    </location>
    <ligand>
        <name>substrate</name>
    </ligand>
</feature>
<feature type="binding site" evidence="2">
    <location>
        <position position="405"/>
    </location>
    <ligand>
        <name>Mg(2+)</name>
        <dbReference type="ChEBI" id="CHEBI:18420"/>
        <label>2</label>
    </ligand>
</feature>
<feature type="binding site" evidence="2">
    <location>
        <position position="407"/>
    </location>
    <ligand>
        <name>substrate</name>
    </ligand>
</feature>
<feature type="binding site" evidence="2">
    <location>
        <position position="474"/>
    </location>
    <ligand>
        <name>substrate</name>
    </ligand>
</feature>
<feature type="binding site" evidence="2">
    <location>
        <position position="479"/>
    </location>
    <ligand>
        <name>substrate</name>
    </ligand>
</feature>
<comment type="function">
    <text evidence="1">Poly(A) nuclease with 3'-5' RNase activity. Catalytic component of the CCR4-NOT complex which is one of the major cellular mRNA deadenylases and is linked to various cellular processes including bulk mRNA degradation, miRNA-mediated repression, translational repression during translational initiation and general transcription regulation. Additional complex functions may be a consequence of its influence on mRNA expression (By similarity).</text>
</comment>
<comment type="catalytic activity">
    <reaction evidence="2">
        <text>Exonucleolytic cleavage of poly(A) to 5'-AMP.</text>
        <dbReference type="EC" id="3.1.13.4"/>
    </reaction>
</comment>
<comment type="cofactor">
    <cofactor evidence="2">
        <name>Mg(2+)</name>
        <dbReference type="ChEBI" id="CHEBI:18420"/>
    </cofactor>
    <text evidence="2">Binds 2 magnesium ions, but the ions interact each with only 1 or 2 residues.</text>
</comment>
<comment type="subunit">
    <text evidence="2">Component of the CCR4-NOT complex.</text>
</comment>
<comment type="subcellular location">
    <subcellularLocation>
        <location evidence="2">Cytoplasm</location>
    </subcellularLocation>
    <subcellularLocation>
        <location evidence="2">Nucleus</location>
    </subcellularLocation>
    <text evidence="2">Predominantly cytoplasmic.</text>
</comment>
<comment type="similarity">
    <text evidence="3">Belongs to the CCR4/nocturin family.</text>
</comment>
<gene>
    <name type="primary">cnot6l-b</name>
</gene>
<proteinExistence type="evidence at transcript level"/>